<evidence type="ECO:0000255" key="1">
    <source>
        <dbReference type="HAMAP-Rule" id="MF_00141"/>
    </source>
</evidence>
<protein>
    <recommendedName>
        <fullName evidence="1">Elongation factor P</fullName>
        <shortName evidence="1">EF-P</shortName>
    </recommendedName>
</protein>
<organism>
    <name type="scientific">Bordetella petrii (strain ATCC BAA-461 / DSM 12804 / CCUG 43448)</name>
    <dbReference type="NCBI Taxonomy" id="340100"/>
    <lineage>
        <taxon>Bacteria</taxon>
        <taxon>Pseudomonadati</taxon>
        <taxon>Pseudomonadota</taxon>
        <taxon>Betaproteobacteria</taxon>
        <taxon>Burkholderiales</taxon>
        <taxon>Alcaligenaceae</taxon>
        <taxon>Bordetella</taxon>
    </lineage>
</organism>
<name>EFP_BORPD</name>
<accession>A9HX42</accession>
<comment type="function">
    <text evidence="1">Involved in peptide bond synthesis. Stimulates efficient translation and peptide-bond synthesis on native or reconstituted 70S ribosomes in vitro. Probably functions indirectly by altering the affinity of the ribosome for aminoacyl-tRNA, thus increasing their reactivity as acceptors for peptidyl transferase.</text>
</comment>
<comment type="pathway">
    <text evidence="1">Protein biosynthesis; polypeptide chain elongation.</text>
</comment>
<comment type="subcellular location">
    <subcellularLocation>
        <location evidence="1">Cytoplasm</location>
    </subcellularLocation>
</comment>
<comment type="similarity">
    <text evidence="1">Belongs to the elongation factor P family.</text>
</comment>
<feature type="chain" id="PRO_1000096125" description="Elongation factor P">
    <location>
        <begin position="1"/>
        <end position="185"/>
    </location>
</feature>
<dbReference type="EMBL" id="AM902716">
    <property type="protein sequence ID" value="CAP43710.1"/>
    <property type="molecule type" value="Genomic_DNA"/>
</dbReference>
<dbReference type="SMR" id="A9HX42"/>
<dbReference type="STRING" id="94624.Bpet3368"/>
<dbReference type="KEGG" id="bpt:Bpet3368"/>
<dbReference type="eggNOG" id="COG0231">
    <property type="taxonomic scope" value="Bacteria"/>
</dbReference>
<dbReference type="UniPathway" id="UPA00345"/>
<dbReference type="Proteomes" id="UP000001225">
    <property type="component" value="Chromosome"/>
</dbReference>
<dbReference type="GO" id="GO:0005737">
    <property type="term" value="C:cytoplasm"/>
    <property type="evidence" value="ECO:0007669"/>
    <property type="project" value="UniProtKB-SubCell"/>
</dbReference>
<dbReference type="GO" id="GO:0003746">
    <property type="term" value="F:translation elongation factor activity"/>
    <property type="evidence" value="ECO:0007669"/>
    <property type="project" value="UniProtKB-UniRule"/>
</dbReference>
<dbReference type="GO" id="GO:0043043">
    <property type="term" value="P:peptide biosynthetic process"/>
    <property type="evidence" value="ECO:0007669"/>
    <property type="project" value="InterPro"/>
</dbReference>
<dbReference type="CDD" id="cd04470">
    <property type="entry name" value="S1_EF-P_repeat_1"/>
    <property type="match status" value="1"/>
</dbReference>
<dbReference type="CDD" id="cd05794">
    <property type="entry name" value="S1_EF-P_repeat_2"/>
    <property type="match status" value="1"/>
</dbReference>
<dbReference type="FunFam" id="2.30.30.30:FF:000003">
    <property type="entry name" value="Elongation factor P"/>
    <property type="match status" value="1"/>
</dbReference>
<dbReference type="FunFam" id="2.40.50.140:FF:000004">
    <property type="entry name" value="Elongation factor P"/>
    <property type="match status" value="1"/>
</dbReference>
<dbReference type="FunFam" id="2.40.50.140:FF:000009">
    <property type="entry name" value="Elongation factor P"/>
    <property type="match status" value="1"/>
</dbReference>
<dbReference type="Gene3D" id="2.30.30.30">
    <property type="match status" value="1"/>
</dbReference>
<dbReference type="Gene3D" id="2.40.50.140">
    <property type="entry name" value="Nucleic acid-binding proteins"/>
    <property type="match status" value="2"/>
</dbReference>
<dbReference type="HAMAP" id="MF_00141">
    <property type="entry name" value="EF_P"/>
    <property type="match status" value="1"/>
</dbReference>
<dbReference type="InterPro" id="IPR015365">
    <property type="entry name" value="Elong-fact-P_C"/>
</dbReference>
<dbReference type="InterPro" id="IPR012340">
    <property type="entry name" value="NA-bd_OB-fold"/>
</dbReference>
<dbReference type="InterPro" id="IPR014722">
    <property type="entry name" value="Rib_uL2_dom2"/>
</dbReference>
<dbReference type="InterPro" id="IPR020599">
    <property type="entry name" value="Transl_elong_fac_P/YeiP"/>
</dbReference>
<dbReference type="InterPro" id="IPR013185">
    <property type="entry name" value="Transl_elong_KOW-like"/>
</dbReference>
<dbReference type="InterPro" id="IPR001059">
    <property type="entry name" value="Transl_elong_P/YeiP_cen"/>
</dbReference>
<dbReference type="InterPro" id="IPR013852">
    <property type="entry name" value="Transl_elong_P/YeiP_CS"/>
</dbReference>
<dbReference type="InterPro" id="IPR011768">
    <property type="entry name" value="Transl_elongation_fac_P"/>
</dbReference>
<dbReference type="InterPro" id="IPR008991">
    <property type="entry name" value="Translation_prot_SH3-like_sf"/>
</dbReference>
<dbReference type="NCBIfam" id="TIGR00038">
    <property type="entry name" value="efp"/>
    <property type="match status" value="1"/>
</dbReference>
<dbReference type="NCBIfam" id="NF001810">
    <property type="entry name" value="PRK00529.1"/>
    <property type="match status" value="1"/>
</dbReference>
<dbReference type="PANTHER" id="PTHR30053">
    <property type="entry name" value="ELONGATION FACTOR P"/>
    <property type="match status" value="1"/>
</dbReference>
<dbReference type="PANTHER" id="PTHR30053:SF12">
    <property type="entry name" value="ELONGATION FACTOR P (EF-P) FAMILY PROTEIN"/>
    <property type="match status" value="1"/>
</dbReference>
<dbReference type="Pfam" id="PF01132">
    <property type="entry name" value="EFP"/>
    <property type="match status" value="1"/>
</dbReference>
<dbReference type="Pfam" id="PF08207">
    <property type="entry name" value="EFP_N"/>
    <property type="match status" value="1"/>
</dbReference>
<dbReference type="Pfam" id="PF09285">
    <property type="entry name" value="Elong-fact-P_C"/>
    <property type="match status" value="1"/>
</dbReference>
<dbReference type="PIRSF" id="PIRSF005901">
    <property type="entry name" value="EF-P"/>
    <property type="match status" value="1"/>
</dbReference>
<dbReference type="SMART" id="SM01185">
    <property type="entry name" value="EFP"/>
    <property type="match status" value="1"/>
</dbReference>
<dbReference type="SMART" id="SM00841">
    <property type="entry name" value="Elong-fact-P_C"/>
    <property type="match status" value="1"/>
</dbReference>
<dbReference type="SUPFAM" id="SSF50249">
    <property type="entry name" value="Nucleic acid-binding proteins"/>
    <property type="match status" value="2"/>
</dbReference>
<dbReference type="SUPFAM" id="SSF50104">
    <property type="entry name" value="Translation proteins SH3-like domain"/>
    <property type="match status" value="1"/>
</dbReference>
<dbReference type="PROSITE" id="PS01275">
    <property type="entry name" value="EFP"/>
    <property type="match status" value="1"/>
</dbReference>
<reference key="1">
    <citation type="journal article" date="2008" name="BMC Genomics">
        <title>The missing link: Bordetella petrii is endowed with both the metabolic versatility of environmental bacteria and virulence traits of pathogenic Bordetellae.</title>
        <authorList>
            <person name="Gross R."/>
            <person name="Guzman C.A."/>
            <person name="Sebaihia M."/>
            <person name="Martin dos Santos V.A.P."/>
            <person name="Pieper D.H."/>
            <person name="Koebnik R."/>
            <person name="Lechner M."/>
            <person name="Bartels D."/>
            <person name="Buhrmester J."/>
            <person name="Choudhuri J.V."/>
            <person name="Ebensen T."/>
            <person name="Gaigalat L."/>
            <person name="Herrmann S."/>
            <person name="Khachane A.N."/>
            <person name="Larisch C."/>
            <person name="Link S."/>
            <person name="Linke B."/>
            <person name="Meyer F."/>
            <person name="Mormann S."/>
            <person name="Nakunst D."/>
            <person name="Rueckert C."/>
            <person name="Schneiker-Bekel S."/>
            <person name="Schulze K."/>
            <person name="Voerholter F.-J."/>
            <person name="Yevsa T."/>
            <person name="Engle J.T."/>
            <person name="Goldman W.E."/>
            <person name="Puehler A."/>
            <person name="Goebel U.B."/>
            <person name="Goesmann A."/>
            <person name="Bloecker H."/>
            <person name="Kaiser O."/>
            <person name="Martinez-Arias R."/>
        </authorList>
    </citation>
    <scope>NUCLEOTIDE SEQUENCE [LARGE SCALE GENOMIC DNA]</scope>
    <source>
        <strain>ATCC BAA-461 / DSM 12804 / CCUG 43448</strain>
    </source>
</reference>
<keyword id="KW-0963">Cytoplasm</keyword>
<keyword id="KW-0251">Elongation factor</keyword>
<keyword id="KW-0648">Protein biosynthesis</keyword>
<sequence length="185" mass="20851">MKTAQELRVGNVVMVGKDPLVVQKAEYNKSGRNAAVVKLKFKNLLTGSGSESVYKADEKFDVVVLDRKECTYSYFGDPMYVFMDEEYNQYEIEAESMGDALNYLEEAMPVEVVFYDGRAISVELPTILVREITYTEPAVRGDTSGKVLKPAKINTGFELNVPLFCAIGDKIEIDTRTNEYRSRVN</sequence>
<proteinExistence type="inferred from homology"/>
<gene>
    <name evidence="1" type="primary">efp</name>
    <name type="ordered locus">Bpet3368</name>
</gene>